<comment type="function">
    <text>Binds to single-stranded sequences participating in DNA replication in addition to those mediating transcriptional repression (URS1) and activation (CAR1). Stimulates the activity of a cognate strand exchange protein (SEP1). It cooperates with T-AG and DNA topoisomerase I to unwind template DNA containing the simian virus 40 origin of DNA replication.</text>
</comment>
<comment type="subunit">
    <text evidence="3">Heterotrimer of 69, 36, and 13 kDa chains. The DNA-binding activity may reside exclusively on the 69 kDa subunit. Interacts with MCM10.</text>
</comment>
<comment type="interaction">
    <interactant intactId="EBI-14976">
        <id>P26754</id>
    </interactant>
    <interactant intactId="EBI-14719">
        <id>P06778</id>
        <label>RAD52</label>
    </interactant>
    <organismsDiffer>false</organismsDiffer>
    <experiments>3</experiments>
</comment>
<comment type="interaction">
    <interactant intactId="EBI-14976">
        <id>P26754</id>
    </interactant>
    <interactant intactId="EBI-14971">
        <id>P22336</id>
        <label>RFA1</label>
    </interactant>
    <organismsDiffer>false</organismsDiffer>
    <experiments>5</experiments>
</comment>
<comment type="interaction">
    <interactant intactId="EBI-14976">
        <id>P26754</id>
    </interactant>
    <interactant intactId="EBI-14981">
        <id>P26755</id>
        <label>RFA3</label>
    </interactant>
    <organismsDiffer>false</organismsDiffer>
    <experiments>3</experiments>
</comment>
<comment type="subcellular location">
    <subcellularLocation>
        <location>Nucleus</location>
    </subcellularLocation>
</comment>
<comment type="PTM">
    <text>Phosphorylated in a cell cycle-dependent manner with phosphorylation increasing at the entry in S phase and dephosphorylation occurring at mitosis.</text>
</comment>
<comment type="PTM">
    <text>The N-terminus is blocked.</text>
</comment>
<comment type="miscellaneous">
    <text evidence="2">Present with 6080 molecules/cell in log phase SD medium.</text>
</comment>
<comment type="similarity">
    <text evidence="4">Belongs to the replication factor A protein 2 family.</text>
</comment>
<evidence type="ECO:0000256" key="1">
    <source>
        <dbReference type="SAM" id="MobiDB-lite"/>
    </source>
</evidence>
<evidence type="ECO:0000269" key="2">
    <source>
    </source>
</evidence>
<evidence type="ECO:0000269" key="3">
    <source>
    </source>
</evidence>
<evidence type="ECO:0000305" key="4"/>
<evidence type="ECO:0007744" key="5">
    <source>
    </source>
</evidence>
<evidence type="ECO:0007744" key="6">
    <source>
    </source>
</evidence>
<evidence type="ECO:0007744" key="7">
    <source>
    </source>
</evidence>
<name>RFA2_YEAST</name>
<protein>
    <recommendedName>
        <fullName>Replication factor A protein 2</fullName>
        <shortName>RF-A protein 2</shortName>
    </recommendedName>
    <alternativeName>
        <fullName>DNA-binding protein BUF1</fullName>
    </alternativeName>
    <alternativeName>
        <fullName>Replication protein A 36 kDa subunit</fullName>
    </alternativeName>
</protein>
<gene>
    <name type="primary">RFA2</name>
    <name type="synonym">BUF1</name>
    <name type="ordered locus">YNL312W</name>
    <name type="ORF">N0368</name>
</gene>
<keyword id="KW-0002">3D-structure</keyword>
<keyword id="KW-0903">Direct protein sequencing</keyword>
<keyword id="KW-0235">DNA replication</keyword>
<keyword id="KW-0238">DNA-binding</keyword>
<keyword id="KW-0539">Nucleus</keyword>
<keyword id="KW-0597">Phosphoprotein</keyword>
<keyword id="KW-1185">Reference proteome</keyword>
<reference key="1">
    <citation type="journal article" date="1991" name="Genes Dev.">
        <title>Replication factor-A from Saccharomyces cerevisiae is encoded by three essential genes coordinately expressed at S phase.</title>
        <authorList>
            <person name="Brill S.J."/>
            <person name="Stillman B."/>
        </authorList>
    </citation>
    <scope>NUCLEOTIDE SEQUENCE [GENOMIC DNA]</scope>
    <scope>PROTEIN SEQUENCE OF 100-118; 150-172 AND 184-196</scope>
    <source>
        <strain>ATCC 208353 / W303-1A</strain>
    </source>
</reference>
<reference key="2">
    <citation type="journal article" date="1993" name="Mol. Cell. Biol.">
        <title>Saccharomyces cerevisiae BUF protein binds to sequences participating in DNA replication in addition to those mediating transcriptional repression (URS1) and activation.</title>
        <authorList>
            <person name="Luche R.M."/>
            <person name="Smart W.C."/>
            <person name="Marion T."/>
            <person name="Tillman M."/>
            <person name="Sumrada R.A."/>
            <person name="Cooper T.G."/>
        </authorList>
    </citation>
    <scope>NUCLEOTIDE SEQUENCE [GENOMIC DNA]</scope>
    <scope>PROTEIN SEQUENCE OF 5-16</scope>
</reference>
<reference key="3">
    <citation type="journal article" date="1995" name="Yeast">
        <title>Sequencing analysis of a 24.7 kb fragment of yeast chromosome XIV identifies six known genes, a new member of the hexose transporter family and ten new open reading frames.</title>
        <authorList>
            <person name="Maftahi M."/>
            <person name="Nicaud J.-M."/>
            <person name="Levesque H."/>
            <person name="Gaillardin C."/>
        </authorList>
    </citation>
    <scope>NUCLEOTIDE SEQUENCE [GENOMIC DNA]</scope>
    <source>
        <strain>S288c / FY1676</strain>
    </source>
</reference>
<reference key="4">
    <citation type="journal article" date="1997" name="Nature">
        <title>The nucleotide sequence of Saccharomyces cerevisiae chromosome XIV and its evolutionary implications.</title>
        <authorList>
            <person name="Philippsen P."/>
            <person name="Kleine K."/>
            <person name="Poehlmann R."/>
            <person name="Duesterhoeft A."/>
            <person name="Hamberg K."/>
            <person name="Hegemann J.H."/>
            <person name="Obermaier B."/>
            <person name="Urrestarazu L.A."/>
            <person name="Aert R."/>
            <person name="Albermann K."/>
            <person name="Altmann R."/>
            <person name="Andre B."/>
            <person name="Baladron V."/>
            <person name="Ballesta J.P.G."/>
            <person name="Becam A.-M."/>
            <person name="Beinhauer J.D."/>
            <person name="Boskovic J."/>
            <person name="Buitrago M.J."/>
            <person name="Bussereau F."/>
            <person name="Coster F."/>
            <person name="Crouzet M."/>
            <person name="D'Angelo M."/>
            <person name="Dal Pero F."/>
            <person name="De Antoni A."/>
            <person name="del Rey F."/>
            <person name="Doignon F."/>
            <person name="Domdey H."/>
            <person name="Dubois E."/>
            <person name="Fiedler T.A."/>
            <person name="Fleig U."/>
            <person name="Floeth M."/>
            <person name="Fritz C."/>
            <person name="Gaillardin C."/>
            <person name="Garcia-Cantalejo J.M."/>
            <person name="Glansdorff N."/>
            <person name="Goffeau A."/>
            <person name="Gueldener U."/>
            <person name="Herbert C.J."/>
            <person name="Heumann K."/>
            <person name="Heuss-Neitzel D."/>
            <person name="Hilbert H."/>
            <person name="Hinni K."/>
            <person name="Iraqui Houssaini I."/>
            <person name="Jacquet M."/>
            <person name="Jimenez A."/>
            <person name="Jonniaux J.-L."/>
            <person name="Karpfinger-Hartl L."/>
            <person name="Lanfranchi G."/>
            <person name="Lepingle A."/>
            <person name="Levesque H."/>
            <person name="Lyck R."/>
            <person name="Maftahi M."/>
            <person name="Mallet L."/>
            <person name="Maurer C.T.C."/>
            <person name="Messenguy F."/>
            <person name="Mewes H.-W."/>
            <person name="Moestl D."/>
            <person name="Nasr F."/>
            <person name="Nicaud J.-M."/>
            <person name="Niedenthal R.K."/>
            <person name="Pandolfo D."/>
            <person name="Pierard A."/>
            <person name="Piravandi E."/>
            <person name="Planta R.J."/>
            <person name="Pohl T.M."/>
            <person name="Purnelle B."/>
            <person name="Rebischung C."/>
            <person name="Remacha M.A."/>
            <person name="Revuelta J.L."/>
            <person name="Rinke M."/>
            <person name="Saiz J.E."/>
            <person name="Sartorello F."/>
            <person name="Scherens B."/>
            <person name="Sen-Gupta M."/>
            <person name="Soler-Mira A."/>
            <person name="Urbanus J.H.M."/>
            <person name="Valle G."/>
            <person name="Van Dyck L."/>
            <person name="Verhasselt P."/>
            <person name="Vierendeels F."/>
            <person name="Vissers S."/>
            <person name="Voet M."/>
            <person name="Volckaert G."/>
            <person name="Wach A."/>
            <person name="Wambutt R."/>
            <person name="Wedler H."/>
            <person name="Zollner A."/>
            <person name="Hani J."/>
        </authorList>
    </citation>
    <scope>NUCLEOTIDE SEQUENCE [LARGE SCALE GENOMIC DNA]</scope>
    <source>
        <strain>ATCC 204508 / S288c</strain>
    </source>
</reference>
<reference key="5">
    <citation type="journal article" date="2014" name="G3 (Bethesda)">
        <title>The reference genome sequence of Saccharomyces cerevisiae: Then and now.</title>
        <authorList>
            <person name="Engel S.R."/>
            <person name="Dietrich F.S."/>
            <person name="Fisk D.G."/>
            <person name="Binkley G."/>
            <person name="Balakrishnan R."/>
            <person name="Costanzo M.C."/>
            <person name="Dwight S.S."/>
            <person name="Hitz B.C."/>
            <person name="Karra K."/>
            <person name="Nash R.S."/>
            <person name="Weng S."/>
            <person name="Wong E.D."/>
            <person name="Lloyd P."/>
            <person name="Skrzypek M.S."/>
            <person name="Miyasato S.R."/>
            <person name="Simison M."/>
            <person name="Cherry J.M."/>
        </authorList>
    </citation>
    <scope>GENOME REANNOTATION</scope>
    <source>
        <strain>ATCC 204508 / S288c</strain>
    </source>
</reference>
<reference key="6">
    <citation type="journal article" date="1990" name="Genes Dev.">
        <title>Cell-cycle-regulated phosphorylation of DNA replication factor A from human and yeast cells.</title>
        <authorList>
            <person name="Din S."/>
            <person name="Brill S.J."/>
            <person name="Fairman M.P."/>
            <person name="Stillman B."/>
        </authorList>
    </citation>
    <scope>CELL CYCLE-DEPENDENT PHOSPHORYLATION</scope>
</reference>
<reference key="7">
    <citation type="journal article" date="2003" name="Nature">
        <title>Global analysis of protein expression in yeast.</title>
        <authorList>
            <person name="Ghaemmaghami S."/>
            <person name="Huh W.-K."/>
            <person name="Bower K."/>
            <person name="Howson R.W."/>
            <person name="Belle A."/>
            <person name="Dephoure N."/>
            <person name="O'Shea E.K."/>
            <person name="Weissman J.S."/>
        </authorList>
    </citation>
    <scope>LEVEL OF PROTEIN EXPRESSION [LARGE SCALE ANALYSIS]</scope>
</reference>
<reference key="8">
    <citation type="journal article" date="2004" name="Mol. Cell">
        <title>Mcm10 regulates the stability and chromatin association of DNA polymerase-alpha.</title>
        <authorList>
            <person name="Ricke R.M."/>
            <person name="Bielinsky A.-K."/>
        </authorList>
    </citation>
    <scope>INTERACTION WITH MCM10</scope>
</reference>
<reference key="9">
    <citation type="journal article" date="2005" name="Mol. Cell. Proteomics">
        <title>Quantitative phosphoproteomics applied to the yeast pheromone signaling pathway.</title>
        <authorList>
            <person name="Gruhler A."/>
            <person name="Olsen J.V."/>
            <person name="Mohammed S."/>
            <person name="Mortensen P."/>
            <person name="Faergeman N.J."/>
            <person name="Mann M."/>
            <person name="Jensen O.N."/>
        </authorList>
    </citation>
    <scope>PHOSPHORYLATION [LARGE SCALE ANALYSIS] AT SER-122</scope>
    <scope>IDENTIFICATION BY MASS SPECTROMETRY [LARGE SCALE ANALYSIS]</scope>
    <source>
        <strain>YAL6B</strain>
    </source>
</reference>
<reference key="10">
    <citation type="journal article" date="2007" name="J. Proteome Res.">
        <title>Large-scale phosphorylation analysis of alpha-factor-arrested Saccharomyces cerevisiae.</title>
        <authorList>
            <person name="Li X."/>
            <person name="Gerber S.A."/>
            <person name="Rudner A.D."/>
            <person name="Beausoleil S.A."/>
            <person name="Haas W."/>
            <person name="Villen J."/>
            <person name="Elias J.E."/>
            <person name="Gygi S.P."/>
        </authorList>
    </citation>
    <scope>IDENTIFICATION BY MASS SPECTROMETRY [LARGE SCALE ANALYSIS]</scope>
    <source>
        <strain>ADR376</strain>
    </source>
</reference>
<reference key="11">
    <citation type="journal article" date="2007" name="Proc. Natl. Acad. Sci. U.S.A.">
        <title>Analysis of phosphorylation sites on proteins from Saccharomyces cerevisiae by electron transfer dissociation (ETD) mass spectrometry.</title>
        <authorList>
            <person name="Chi A."/>
            <person name="Huttenhower C."/>
            <person name="Geer L.Y."/>
            <person name="Coon J.J."/>
            <person name="Syka J.E.P."/>
            <person name="Bai D.L."/>
            <person name="Shabanowitz J."/>
            <person name="Burke D.J."/>
            <person name="Troyanskaya O.G."/>
            <person name="Hunt D.F."/>
        </authorList>
    </citation>
    <scope>PHOSPHORYLATION [LARGE SCALE ANALYSIS] AT SER-122</scope>
    <scope>IDENTIFICATION BY MASS SPECTROMETRY [LARGE SCALE ANALYSIS]</scope>
</reference>
<reference key="12">
    <citation type="journal article" date="2008" name="Mol. Cell. Proteomics">
        <title>A multidimensional chromatography technology for in-depth phosphoproteome analysis.</title>
        <authorList>
            <person name="Albuquerque C.P."/>
            <person name="Smolka M.B."/>
            <person name="Payne S.H."/>
            <person name="Bafna V."/>
            <person name="Eng J."/>
            <person name="Zhou H."/>
        </authorList>
    </citation>
    <scope>PHOSPHORYLATION [LARGE SCALE ANALYSIS] AT SER-27 AND SER-122</scope>
    <scope>IDENTIFICATION BY MASS SPECTROMETRY [LARGE SCALE ANALYSIS]</scope>
</reference>
<reference key="13">
    <citation type="journal article" date="2009" name="Science">
        <title>Global analysis of Cdk1 substrate phosphorylation sites provides insights into evolution.</title>
        <authorList>
            <person name="Holt L.J."/>
            <person name="Tuch B.B."/>
            <person name="Villen J."/>
            <person name="Johnson A.D."/>
            <person name="Gygi S.P."/>
            <person name="Morgan D.O."/>
        </authorList>
    </citation>
    <scope>IDENTIFICATION BY MASS SPECTROMETRY [LARGE SCALE ANALYSIS]</scope>
</reference>
<feature type="chain" id="PRO_0000097275" description="Replication factor A protein 2">
    <location>
        <begin position="1"/>
        <end position="273"/>
    </location>
</feature>
<feature type="DNA-binding region" description="OB">
    <location>
        <begin position="69"/>
        <end position="157"/>
    </location>
</feature>
<feature type="region of interest" description="Disordered" evidence="1">
    <location>
        <begin position="1"/>
        <end position="38"/>
    </location>
</feature>
<feature type="compositionally biased region" description="Polar residues" evidence="1">
    <location>
        <begin position="1"/>
        <end position="13"/>
    </location>
</feature>
<feature type="compositionally biased region" description="Polar residues" evidence="1">
    <location>
        <begin position="29"/>
        <end position="38"/>
    </location>
</feature>
<feature type="modified residue" description="Phosphoserine" evidence="7">
    <location>
        <position position="27"/>
    </location>
</feature>
<feature type="modified residue" description="Phosphoserine" evidence="5 6 7">
    <location>
        <position position="122"/>
    </location>
</feature>
<proteinExistence type="evidence at protein level"/>
<organism>
    <name type="scientific">Saccharomyces cerevisiae (strain ATCC 204508 / S288c)</name>
    <name type="common">Baker's yeast</name>
    <dbReference type="NCBI Taxonomy" id="559292"/>
    <lineage>
        <taxon>Eukaryota</taxon>
        <taxon>Fungi</taxon>
        <taxon>Dikarya</taxon>
        <taxon>Ascomycota</taxon>
        <taxon>Saccharomycotina</taxon>
        <taxon>Saccharomycetes</taxon>
        <taxon>Saccharomycetales</taxon>
        <taxon>Saccharomycetaceae</taxon>
        <taxon>Saccharomyces</taxon>
    </lineage>
</organism>
<sequence>MATYQPYNEYSSVTGGGFENSESRPGSGESETNTRVNTLTPVTIKQILESKQDIQDGPFVSHNQELHHVCFVGVVRNITDHTANIFLTIEDGTGQIEVRKWSEDANDLAAGNDDSSGKGYGSQVAQQFEIGGYVKVFGALKEFGGKKNIQYAVIKPIDSFNEVLTHHLEVIKCHSIASGMMKQPLESASNNNGQSLFVKDDNDTSSGSSPLQRILEFCKKQCEGKDANSFAVPIPLISQSLNLDETTVRNCCTTLTDQGFIYPTFDDNNFFAL</sequence>
<accession>P26754</accession>
<accession>D6W0N3</accession>
<accession>P38905</accession>
<dbReference type="EMBL" id="X59749">
    <property type="protein sequence ID" value="CAA42421.1"/>
    <property type="molecule type" value="Genomic_DNA"/>
</dbReference>
<dbReference type="EMBL" id="S64861">
    <property type="protein sequence ID" value="AAB27888.1"/>
    <property type="molecule type" value="Genomic_DNA"/>
</dbReference>
<dbReference type="EMBL" id="Z46259">
    <property type="status" value="NOT_ANNOTATED_CDS"/>
    <property type="molecule type" value="Genomic_DNA"/>
</dbReference>
<dbReference type="EMBL" id="Z71588">
    <property type="protein sequence ID" value="CAA96241.1"/>
    <property type="molecule type" value="Genomic_DNA"/>
</dbReference>
<dbReference type="EMBL" id="BK006947">
    <property type="protein sequence ID" value="DAA10249.1"/>
    <property type="molecule type" value="Genomic_DNA"/>
</dbReference>
<dbReference type="PIR" id="B37281">
    <property type="entry name" value="B37281"/>
</dbReference>
<dbReference type="RefSeq" id="NP_014087.1">
    <property type="nucleotide sequence ID" value="NM_001183150.1"/>
</dbReference>
<dbReference type="PDB" id="6I52">
    <property type="method" value="EM"/>
    <property type="resolution" value="4.70 A"/>
    <property type="chains" value="B=32-182"/>
</dbReference>
<dbReference type="PDBsum" id="6I52"/>
<dbReference type="EMDB" id="EMD-4410"/>
<dbReference type="SMR" id="P26754"/>
<dbReference type="BioGRID" id="35527">
    <property type="interactions" value="397"/>
</dbReference>
<dbReference type="ComplexPortal" id="CPX-21">
    <property type="entry name" value="Replication protein A complex"/>
</dbReference>
<dbReference type="DIP" id="DIP-2518N"/>
<dbReference type="FunCoup" id="P26754">
    <property type="interactions" value="1100"/>
</dbReference>
<dbReference type="IntAct" id="P26754">
    <property type="interactions" value="26"/>
</dbReference>
<dbReference type="MINT" id="P26754"/>
<dbReference type="STRING" id="4932.YNL312W"/>
<dbReference type="iPTMnet" id="P26754"/>
<dbReference type="PaxDb" id="4932-YNL312W"/>
<dbReference type="PeptideAtlas" id="P26754"/>
<dbReference type="EnsemblFungi" id="YNL312W_mRNA">
    <property type="protein sequence ID" value="YNL312W"/>
    <property type="gene ID" value="YNL312W"/>
</dbReference>
<dbReference type="GeneID" id="855404"/>
<dbReference type="KEGG" id="sce:YNL312W"/>
<dbReference type="AGR" id="SGD:S000005256"/>
<dbReference type="SGD" id="S000005256">
    <property type="gene designation" value="RFA2"/>
</dbReference>
<dbReference type="VEuPathDB" id="FungiDB:YNL312W"/>
<dbReference type="eggNOG" id="KOG3108">
    <property type="taxonomic scope" value="Eukaryota"/>
</dbReference>
<dbReference type="GeneTree" id="ENSGT00940000168634"/>
<dbReference type="HOGENOM" id="CLU_051033_0_0_1"/>
<dbReference type="InParanoid" id="P26754"/>
<dbReference type="OMA" id="SFGNKRY"/>
<dbReference type="OrthoDB" id="25571at2759"/>
<dbReference type="BioCyc" id="YEAST:G3O-33299-MONOMER"/>
<dbReference type="Reactome" id="R-SCE-110312">
    <property type="pathway name" value="Translesion synthesis by REV1"/>
</dbReference>
<dbReference type="Reactome" id="R-SCE-110320">
    <property type="pathway name" value="Translesion Synthesis by POLH"/>
</dbReference>
<dbReference type="Reactome" id="R-SCE-176187">
    <property type="pathway name" value="Activation of ATR in response to replication stress"/>
</dbReference>
<dbReference type="Reactome" id="R-SCE-5655862">
    <property type="pathway name" value="Translesion synthesis by POLK"/>
</dbReference>
<dbReference type="Reactome" id="R-SCE-5656121">
    <property type="pathway name" value="Translesion synthesis by POLI"/>
</dbReference>
<dbReference type="Reactome" id="R-SCE-5656169">
    <property type="pathway name" value="Termination of translesion DNA synthesis"/>
</dbReference>
<dbReference type="Reactome" id="R-SCE-5696397">
    <property type="pathway name" value="Gap-filling DNA repair synthesis and ligation in GG-NER"/>
</dbReference>
<dbReference type="Reactome" id="R-SCE-6782135">
    <property type="pathway name" value="Dual incision in TC-NER"/>
</dbReference>
<dbReference type="Reactome" id="R-SCE-6782210">
    <property type="pathway name" value="Gap-filling DNA repair synthesis and ligation in TC-NER"/>
</dbReference>
<dbReference type="Reactome" id="R-SCE-68962">
    <property type="pathway name" value="Activation of the pre-replicative complex"/>
</dbReference>
<dbReference type="Reactome" id="R-SCE-69166">
    <property type="pathway name" value="Removal of the Flap Intermediate"/>
</dbReference>
<dbReference type="BioGRID-ORCS" id="855404">
    <property type="hits" value="7 hits in 10 CRISPR screens"/>
</dbReference>
<dbReference type="CD-CODE" id="E03F929F">
    <property type="entry name" value="Stress granule"/>
</dbReference>
<dbReference type="PRO" id="PR:P26754"/>
<dbReference type="Proteomes" id="UP000002311">
    <property type="component" value="Chromosome XIV"/>
</dbReference>
<dbReference type="RNAct" id="P26754">
    <property type="molecule type" value="protein"/>
</dbReference>
<dbReference type="GO" id="GO:0000781">
    <property type="term" value="C:chromosome, telomeric region"/>
    <property type="evidence" value="ECO:0000315"/>
    <property type="project" value="SGD"/>
</dbReference>
<dbReference type="GO" id="GO:0000794">
    <property type="term" value="C:condensed nuclear chromosome"/>
    <property type="evidence" value="ECO:0000314"/>
    <property type="project" value="SGD"/>
</dbReference>
<dbReference type="GO" id="GO:0005662">
    <property type="term" value="C:DNA replication factor A complex"/>
    <property type="evidence" value="ECO:0000314"/>
    <property type="project" value="SGD"/>
</dbReference>
<dbReference type="GO" id="GO:0035861">
    <property type="term" value="C:site of double-strand break"/>
    <property type="evidence" value="ECO:0000318"/>
    <property type="project" value="GO_Central"/>
</dbReference>
<dbReference type="GO" id="GO:0003690">
    <property type="term" value="F:double-stranded DNA binding"/>
    <property type="evidence" value="ECO:0000314"/>
    <property type="project" value="SGD"/>
</dbReference>
<dbReference type="GO" id="GO:0043565">
    <property type="term" value="F:sequence-specific DNA binding"/>
    <property type="evidence" value="ECO:0000314"/>
    <property type="project" value="SGD"/>
</dbReference>
<dbReference type="GO" id="GO:0003697">
    <property type="term" value="F:single-stranded DNA binding"/>
    <property type="evidence" value="ECO:0000314"/>
    <property type="project" value="SGD"/>
</dbReference>
<dbReference type="GO" id="GO:0042162">
    <property type="term" value="F:telomeric DNA binding"/>
    <property type="evidence" value="ECO:0000318"/>
    <property type="project" value="GO_Central"/>
</dbReference>
<dbReference type="GO" id="GO:0006281">
    <property type="term" value="P:DNA repair"/>
    <property type="evidence" value="ECO:0000314"/>
    <property type="project" value="ComplexPortal"/>
</dbReference>
<dbReference type="GO" id="GO:0006260">
    <property type="term" value="P:DNA replication"/>
    <property type="evidence" value="ECO:0000314"/>
    <property type="project" value="ComplexPortal"/>
</dbReference>
<dbReference type="GO" id="GO:0006265">
    <property type="term" value="P:DNA topological change"/>
    <property type="evidence" value="ECO:0000314"/>
    <property type="project" value="SGD"/>
</dbReference>
<dbReference type="GO" id="GO:0000724">
    <property type="term" value="P:double-strand break repair via homologous recombination"/>
    <property type="evidence" value="ECO:0000316"/>
    <property type="project" value="SGD"/>
</dbReference>
<dbReference type="GO" id="GO:0045184">
    <property type="term" value="P:establishment of protein localization"/>
    <property type="evidence" value="ECO:0000315"/>
    <property type="project" value="SGD"/>
</dbReference>
<dbReference type="GO" id="GO:0030491">
    <property type="term" value="P:heteroduplex formation"/>
    <property type="evidence" value="ECO:0000314"/>
    <property type="project" value="SGD"/>
</dbReference>
<dbReference type="GO" id="GO:0006312">
    <property type="term" value="P:mitotic recombination"/>
    <property type="evidence" value="ECO:0000353"/>
    <property type="project" value="ComplexPortal"/>
</dbReference>
<dbReference type="GO" id="GO:0006289">
    <property type="term" value="P:nucleotide-excision repair"/>
    <property type="evidence" value="ECO:0000314"/>
    <property type="project" value="SGD"/>
</dbReference>
<dbReference type="GO" id="GO:0016567">
    <property type="term" value="P:protein ubiquitination"/>
    <property type="evidence" value="ECO:0000353"/>
    <property type="project" value="SGD"/>
</dbReference>
<dbReference type="GO" id="GO:0007131">
    <property type="term" value="P:reciprocal meiotic recombination"/>
    <property type="evidence" value="ECO:0000353"/>
    <property type="project" value="SGD"/>
</dbReference>
<dbReference type="GO" id="GO:0000723">
    <property type="term" value="P:telomere maintenance"/>
    <property type="evidence" value="ECO:0000303"/>
    <property type="project" value="ComplexPortal"/>
</dbReference>
<dbReference type="GO" id="GO:0000722">
    <property type="term" value="P:telomere maintenance via recombination"/>
    <property type="evidence" value="ECO:0000353"/>
    <property type="project" value="SGD"/>
</dbReference>
<dbReference type="GO" id="GO:0007004">
    <property type="term" value="P:telomere maintenance via telomerase"/>
    <property type="evidence" value="ECO:0000315"/>
    <property type="project" value="SGD"/>
</dbReference>
<dbReference type="GO" id="GO:0010833">
    <property type="term" value="P:telomere maintenance via telomere lengthening"/>
    <property type="evidence" value="ECO:0000315"/>
    <property type="project" value="SGD"/>
</dbReference>
<dbReference type="CDD" id="cd04478">
    <property type="entry name" value="RPA2_DBD_D"/>
    <property type="match status" value="1"/>
</dbReference>
<dbReference type="FunFam" id="2.40.50.140:FF:000482">
    <property type="entry name" value="Replication factor-A protein 2"/>
    <property type="match status" value="1"/>
</dbReference>
<dbReference type="Gene3D" id="2.40.50.140">
    <property type="entry name" value="Nucleic acid-binding proteins"/>
    <property type="match status" value="1"/>
</dbReference>
<dbReference type="Gene3D" id="1.10.10.10">
    <property type="entry name" value="Winged helix-like DNA-binding domain superfamily/Winged helix DNA-binding domain"/>
    <property type="match status" value="1"/>
</dbReference>
<dbReference type="InterPro" id="IPR012340">
    <property type="entry name" value="NA-bd_OB-fold"/>
</dbReference>
<dbReference type="InterPro" id="IPR004365">
    <property type="entry name" value="NA-bd_OB_tRNA"/>
</dbReference>
<dbReference type="InterPro" id="IPR040260">
    <property type="entry name" value="RFA2-like"/>
</dbReference>
<dbReference type="InterPro" id="IPR014646">
    <property type="entry name" value="Rfa2/RPA32"/>
</dbReference>
<dbReference type="InterPro" id="IPR014892">
    <property type="entry name" value="RPA_C"/>
</dbReference>
<dbReference type="InterPro" id="IPR036388">
    <property type="entry name" value="WH-like_DNA-bd_sf"/>
</dbReference>
<dbReference type="InterPro" id="IPR036390">
    <property type="entry name" value="WH_DNA-bd_sf"/>
</dbReference>
<dbReference type="PANTHER" id="PTHR13989">
    <property type="entry name" value="REPLICATION PROTEIN A-RELATED"/>
    <property type="match status" value="1"/>
</dbReference>
<dbReference type="PANTHER" id="PTHR13989:SF16">
    <property type="entry name" value="REPLICATION PROTEIN A2"/>
    <property type="match status" value="1"/>
</dbReference>
<dbReference type="Pfam" id="PF08784">
    <property type="entry name" value="RPA_C"/>
    <property type="match status" value="1"/>
</dbReference>
<dbReference type="Pfam" id="PF01336">
    <property type="entry name" value="tRNA_anti-codon"/>
    <property type="match status" value="1"/>
</dbReference>
<dbReference type="PIRSF" id="PIRSF036949">
    <property type="entry name" value="RPA32"/>
    <property type="match status" value="1"/>
</dbReference>
<dbReference type="SUPFAM" id="SSF50249">
    <property type="entry name" value="Nucleic acid-binding proteins"/>
    <property type="match status" value="1"/>
</dbReference>
<dbReference type="SUPFAM" id="SSF46785">
    <property type="entry name" value="Winged helix' DNA-binding domain"/>
    <property type="match status" value="1"/>
</dbReference>